<proteinExistence type="inferred from homology"/>
<gene>
    <name evidence="1" type="primary">msrQ</name>
    <name type="ordered locus">Rru_A0594</name>
</gene>
<feature type="chain" id="PRO_1000066185" description="Protein-methionine-sulfoxide reductase heme-binding subunit MsrQ">
    <location>
        <begin position="1"/>
        <end position="208"/>
    </location>
</feature>
<feature type="transmembrane region" description="Helical" evidence="1">
    <location>
        <begin position="16"/>
        <end position="36"/>
    </location>
</feature>
<feature type="transmembrane region" description="Helical" evidence="1">
    <location>
        <begin position="53"/>
        <end position="73"/>
    </location>
</feature>
<feature type="transmembrane region" description="Helical" evidence="1">
    <location>
        <begin position="82"/>
        <end position="102"/>
    </location>
</feature>
<feature type="transmembrane region" description="Helical" evidence="1">
    <location>
        <begin position="118"/>
        <end position="138"/>
    </location>
</feature>
<feature type="transmembrane region" description="Helical" evidence="1">
    <location>
        <begin position="156"/>
        <end position="176"/>
    </location>
</feature>
<feature type="transmembrane region" description="Helical" evidence="1">
    <location>
        <begin position="178"/>
        <end position="198"/>
    </location>
</feature>
<reference key="1">
    <citation type="journal article" date="2011" name="Stand. Genomic Sci.">
        <title>Complete genome sequence of Rhodospirillum rubrum type strain (S1).</title>
        <authorList>
            <person name="Munk A.C."/>
            <person name="Copeland A."/>
            <person name="Lucas S."/>
            <person name="Lapidus A."/>
            <person name="Del Rio T.G."/>
            <person name="Barry K."/>
            <person name="Detter J.C."/>
            <person name="Hammon N."/>
            <person name="Israni S."/>
            <person name="Pitluck S."/>
            <person name="Brettin T."/>
            <person name="Bruce D."/>
            <person name="Han C."/>
            <person name="Tapia R."/>
            <person name="Gilna P."/>
            <person name="Schmutz J."/>
            <person name="Larimer F."/>
            <person name="Land M."/>
            <person name="Kyrpides N.C."/>
            <person name="Mavromatis K."/>
            <person name="Richardson P."/>
            <person name="Rohde M."/>
            <person name="Goeker M."/>
            <person name="Klenk H.P."/>
            <person name="Zhang Y."/>
            <person name="Roberts G.P."/>
            <person name="Reslewic S."/>
            <person name="Schwartz D.C."/>
        </authorList>
    </citation>
    <scope>NUCLEOTIDE SEQUENCE [LARGE SCALE GENOMIC DNA]</scope>
    <source>
        <strain>ATCC 11170 / ATH 1.1.1 / DSM 467 / LMG 4362 / NCIMB 8255 / S1</strain>
    </source>
</reference>
<comment type="function">
    <text evidence="1">Part of the MsrPQ system that repairs oxidized periplasmic proteins containing methionine sulfoxide residues (Met-O), using respiratory chain electrons. Thus protects these proteins from oxidative-stress damage caused by reactive species of oxygen and chlorine generated by the host defense mechanisms. MsrPQ is essential for the maintenance of envelope integrity under bleach stress, rescuing a wide series of structurally unrelated periplasmic proteins from methionine oxidation. MsrQ provides electrons for reduction to the reductase catalytic subunit MsrP, using the quinone pool of the respiratory chain.</text>
</comment>
<comment type="cofactor">
    <cofactor evidence="1">
        <name>FMN</name>
        <dbReference type="ChEBI" id="CHEBI:58210"/>
    </cofactor>
    <text evidence="1">Binds 1 FMN per subunit.</text>
</comment>
<comment type="cofactor">
    <cofactor evidence="1">
        <name>heme b</name>
        <dbReference type="ChEBI" id="CHEBI:60344"/>
    </cofactor>
    <text evidence="1">Binds 1 heme b (iron(II)-protoporphyrin IX) group per subunit.</text>
</comment>
<comment type="subunit">
    <text evidence="1">Heterodimer of a catalytic subunit (MsrP) and a heme-binding subunit (MsrQ).</text>
</comment>
<comment type="subcellular location">
    <subcellularLocation>
        <location evidence="1">Cell inner membrane</location>
        <topology evidence="1">Multi-pass membrane protein</topology>
    </subcellularLocation>
</comment>
<comment type="similarity">
    <text evidence="1">Belongs to the MsrQ family.</text>
</comment>
<name>MSRQ_RHORT</name>
<accession>Q2RWU7</accession>
<evidence type="ECO:0000255" key="1">
    <source>
        <dbReference type="HAMAP-Rule" id="MF_01207"/>
    </source>
</evidence>
<organism>
    <name type="scientific">Rhodospirillum rubrum (strain ATCC 11170 / ATH 1.1.1 / DSM 467 / LMG 4362 / NCIMB 8255 / S1)</name>
    <dbReference type="NCBI Taxonomy" id="269796"/>
    <lineage>
        <taxon>Bacteria</taxon>
        <taxon>Pseudomonadati</taxon>
        <taxon>Pseudomonadota</taxon>
        <taxon>Alphaproteobacteria</taxon>
        <taxon>Rhodospirillales</taxon>
        <taxon>Rhodospirillaceae</taxon>
        <taxon>Rhodospirillum</taxon>
    </lineage>
</organism>
<keyword id="KW-0997">Cell inner membrane</keyword>
<keyword id="KW-1003">Cell membrane</keyword>
<keyword id="KW-0249">Electron transport</keyword>
<keyword id="KW-0285">Flavoprotein</keyword>
<keyword id="KW-0288">FMN</keyword>
<keyword id="KW-0349">Heme</keyword>
<keyword id="KW-0408">Iron</keyword>
<keyword id="KW-0472">Membrane</keyword>
<keyword id="KW-0479">Metal-binding</keyword>
<keyword id="KW-1185">Reference proteome</keyword>
<keyword id="KW-0812">Transmembrane</keyword>
<keyword id="KW-1133">Transmembrane helix</keyword>
<keyword id="KW-0813">Transport</keyword>
<dbReference type="EMBL" id="CP000230">
    <property type="protein sequence ID" value="ABC21398.1"/>
    <property type="molecule type" value="Genomic_DNA"/>
</dbReference>
<dbReference type="RefSeq" id="WP_011388352.1">
    <property type="nucleotide sequence ID" value="NC_007643.1"/>
</dbReference>
<dbReference type="RefSeq" id="YP_425685.1">
    <property type="nucleotide sequence ID" value="NC_007643.1"/>
</dbReference>
<dbReference type="SMR" id="Q2RWU7"/>
<dbReference type="STRING" id="269796.Rru_A0594"/>
<dbReference type="EnsemblBacteria" id="ABC21398">
    <property type="protein sequence ID" value="ABC21398"/>
    <property type="gene ID" value="Rru_A0594"/>
</dbReference>
<dbReference type="KEGG" id="rru:Rru_A0594"/>
<dbReference type="PATRIC" id="fig|269796.9.peg.648"/>
<dbReference type="eggNOG" id="COG2717">
    <property type="taxonomic scope" value="Bacteria"/>
</dbReference>
<dbReference type="HOGENOM" id="CLU_080662_0_1_5"/>
<dbReference type="PhylomeDB" id="Q2RWU7"/>
<dbReference type="Proteomes" id="UP000001929">
    <property type="component" value="Chromosome"/>
</dbReference>
<dbReference type="GO" id="GO:0005886">
    <property type="term" value="C:plasma membrane"/>
    <property type="evidence" value="ECO:0007669"/>
    <property type="project" value="UniProtKB-SubCell"/>
</dbReference>
<dbReference type="GO" id="GO:0009055">
    <property type="term" value="F:electron transfer activity"/>
    <property type="evidence" value="ECO:0007669"/>
    <property type="project" value="UniProtKB-UniRule"/>
</dbReference>
<dbReference type="GO" id="GO:0010181">
    <property type="term" value="F:FMN binding"/>
    <property type="evidence" value="ECO:0007669"/>
    <property type="project" value="UniProtKB-UniRule"/>
</dbReference>
<dbReference type="GO" id="GO:0020037">
    <property type="term" value="F:heme binding"/>
    <property type="evidence" value="ECO:0007669"/>
    <property type="project" value="UniProtKB-UniRule"/>
</dbReference>
<dbReference type="GO" id="GO:0046872">
    <property type="term" value="F:metal ion binding"/>
    <property type="evidence" value="ECO:0007669"/>
    <property type="project" value="UniProtKB-KW"/>
</dbReference>
<dbReference type="GO" id="GO:0016679">
    <property type="term" value="F:oxidoreductase activity, acting on diphenols and related substances as donors"/>
    <property type="evidence" value="ECO:0007669"/>
    <property type="project" value="TreeGrafter"/>
</dbReference>
<dbReference type="GO" id="GO:0030091">
    <property type="term" value="P:protein repair"/>
    <property type="evidence" value="ECO:0007669"/>
    <property type="project" value="UniProtKB-UniRule"/>
</dbReference>
<dbReference type="HAMAP" id="MF_01207">
    <property type="entry name" value="MsrQ"/>
    <property type="match status" value="1"/>
</dbReference>
<dbReference type="InterPro" id="IPR013130">
    <property type="entry name" value="Fe3_Rdtase_TM_dom"/>
</dbReference>
<dbReference type="InterPro" id="IPR022837">
    <property type="entry name" value="MsrQ-like"/>
</dbReference>
<dbReference type="PANTHER" id="PTHR36964">
    <property type="entry name" value="PROTEIN-METHIONINE-SULFOXIDE REDUCTASE HEME-BINDING SUBUNIT MSRQ"/>
    <property type="match status" value="1"/>
</dbReference>
<dbReference type="PANTHER" id="PTHR36964:SF1">
    <property type="entry name" value="PROTEIN-METHIONINE-SULFOXIDE REDUCTASE HEME-BINDING SUBUNIT MSRQ"/>
    <property type="match status" value="1"/>
</dbReference>
<dbReference type="Pfam" id="PF01794">
    <property type="entry name" value="Ferric_reduct"/>
    <property type="match status" value="1"/>
</dbReference>
<protein>
    <recommendedName>
        <fullName evidence="1">Protein-methionine-sulfoxide reductase heme-binding subunit MsrQ</fullName>
    </recommendedName>
    <alternativeName>
        <fullName evidence="1">Flavocytochrome MsrQ</fullName>
    </alternativeName>
</protein>
<sequence length="208" mass="23164">MTGGSVLKDRDRLGRIAVFVACLLPLVWYGARFVGGDLGANPIEAFTRKLGEWGLIFLLASLAATPARLLWGWTFPLRRRRMVGLFAFFYVCLHLLSYIGLDQFFDWGAIWADIVKRTYITVGMAALLLLVPLAVTSTRGMVRRLGGKRWIALHRLVYPAAVLGVLHYMLMVKADLSEPLIFAGILGLLLAVRLVPAVRRRRSGRAPS</sequence>